<evidence type="ECO:0000255" key="1">
    <source>
        <dbReference type="HAMAP-Rule" id="MF_00014"/>
    </source>
</evidence>
<evidence type="ECO:0000256" key="2">
    <source>
        <dbReference type="SAM" id="MobiDB-lite"/>
    </source>
</evidence>
<proteinExistence type="inferred from homology"/>
<name>RIMM_BURMS</name>
<feature type="chain" id="PRO_0000351734" description="Ribosome maturation factor RimM">
    <location>
        <begin position="1"/>
        <end position="229"/>
    </location>
</feature>
<feature type="domain" description="PRC barrel" evidence="1">
    <location>
        <begin position="148"/>
        <end position="229"/>
    </location>
</feature>
<feature type="region of interest" description="Disordered" evidence="2">
    <location>
        <begin position="1"/>
        <end position="21"/>
    </location>
</feature>
<keyword id="KW-0143">Chaperone</keyword>
<keyword id="KW-0963">Cytoplasm</keyword>
<keyword id="KW-0690">Ribosome biogenesis</keyword>
<keyword id="KW-0698">rRNA processing</keyword>
<reference key="1">
    <citation type="journal article" date="2010" name="Genome Biol. Evol.">
        <title>Continuing evolution of Burkholderia mallei through genome reduction and large-scale rearrangements.</title>
        <authorList>
            <person name="Losada L."/>
            <person name="Ronning C.M."/>
            <person name="DeShazer D."/>
            <person name="Woods D."/>
            <person name="Fedorova N."/>
            <person name="Kim H.S."/>
            <person name="Shabalina S.A."/>
            <person name="Pearson T.R."/>
            <person name="Brinkac L."/>
            <person name="Tan P."/>
            <person name="Nandi T."/>
            <person name="Crabtree J."/>
            <person name="Badger J."/>
            <person name="Beckstrom-Sternberg S."/>
            <person name="Saqib M."/>
            <person name="Schutzer S.E."/>
            <person name="Keim P."/>
            <person name="Nierman W.C."/>
        </authorList>
    </citation>
    <scope>NUCLEOTIDE SEQUENCE [LARGE SCALE GENOMIC DNA]</scope>
    <source>
        <strain>SAVP1</strain>
    </source>
</reference>
<organism>
    <name type="scientific">Burkholderia mallei (strain SAVP1)</name>
    <dbReference type="NCBI Taxonomy" id="320388"/>
    <lineage>
        <taxon>Bacteria</taxon>
        <taxon>Pseudomonadati</taxon>
        <taxon>Pseudomonadota</taxon>
        <taxon>Betaproteobacteria</taxon>
        <taxon>Burkholderiales</taxon>
        <taxon>Burkholderiaceae</taxon>
        <taxon>Burkholderia</taxon>
        <taxon>pseudomallei group</taxon>
    </lineage>
</organism>
<comment type="function">
    <text evidence="1">An accessory protein needed during the final step in the assembly of 30S ribosomal subunit, possibly for assembly of the head region. Essential for efficient processing of 16S rRNA. May be needed both before and after RbfA during the maturation of 16S rRNA. It has affinity for free ribosomal 30S subunits but not for 70S ribosomes.</text>
</comment>
<comment type="subunit">
    <text evidence="1">Binds ribosomal protein uS19.</text>
</comment>
<comment type="subcellular location">
    <subcellularLocation>
        <location evidence="1">Cytoplasm</location>
    </subcellularLocation>
</comment>
<comment type="domain">
    <text evidence="1">The PRC barrel domain binds ribosomal protein uS19.</text>
</comment>
<comment type="similarity">
    <text evidence="1">Belongs to the RimM family.</text>
</comment>
<gene>
    <name evidence="1" type="primary">rimM</name>
    <name type="ordered locus">BMASAVP1_A2544</name>
</gene>
<sequence>MAGHDSGNAKRGRSPSFGVFVRKPVERAPAKGASDGAVDSQAIRIDAAQSWPDDAVEVGAVVDAYGLKGWVKLAAHAGAGRGGDALLKARDWWLQKGAERKFARVTQAKLHGDTVVAHPDGSVDRDTALALRGARVFVRRGDFPALAADEFYWVDLIGLDVVNEAGVALGKIADMIDNGVHSIMRVEYPATGKDGRPKTGERLIPFVGVYVKAVEQAAGRVVVDWEADY</sequence>
<dbReference type="EMBL" id="CP000526">
    <property type="protein sequence ID" value="ABM52820.1"/>
    <property type="molecule type" value="Genomic_DNA"/>
</dbReference>
<dbReference type="RefSeq" id="WP_004195969.1">
    <property type="nucleotide sequence ID" value="NC_008785.1"/>
</dbReference>
<dbReference type="SMR" id="A1V6J3"/>
<dbReference type="GeneID" id="93061078"/>
<dbReference type="KEGG" id="bmv:BMASAVP1_A2544"/>
<dbReference type="HOGENOM" id="CLU_077636_1_0_4"/>
<dbReference type="GO" id="GO:0005737">
    <property type="term" value="C:cytoplasm"/>
    <property type="evidence" value="ECO:0007669"/>
    <property type="project" value="UniProtKB-SubCell"/>
</dbReference>
<dbReference type="GO" id="GO:0005840">
    <property type="term" value="C:ribosome"/>
    <property type="evidence" value="ECO:0007669"/>
    <property type="project" value="InterPro"/>
</dbReference>
<dbReference type="GO" id="GO:0043022">
    <property type="term" value="F:ribosome binding"/>
    <property type="evidence" value="ECO:0007669"/>
    <property type="project" value="InterPro"/>
</dbReference>
<dbReference type="GO" id="GO:0042274">
    <property type="term" value="P:ribosomal small subunit biogenesis"/>
    <property type="evidence" value="ECO:0007669"/>
    <property type="project" value="UniProtKB-UniRule"/>
</dbReference>
<dbReference type="GO" id="GO:0006364">
    <property type="term" value="P:rRNA processing"/>
    <property type="evidence" value="ECO:0007669"/>
    <property type="project" value="UniProtKB-UniRule"/>
</dbReference>
<dbReference type="Gene3D" id="2.30.30.240">
    <property type="entry name" value="PRC-barrel domain"/>
    <property type="match status" value="1"/>
</dbReference>
<dbReference type="Gene3D" id="2.40.30.60">
    <property type="entry name" value="RimM"/>
    <property type="match status" value="1"/>
</dbReference>
<dbReference type="HAMAP" id="MF_00014">
    <property type="entry name" value="Ribosome_mat_RimM"/>
    <property type="match status" value="1"/>
</dbReference>
<dbReference type="InterPro" id="IPR011033">
    <property type="entry name" value="PRC_barrel-like_sf"/>
</dbReference>
<dbReference type="InterPro" id="IPR056792">
    <property type="entry name" value="PRC_RimM"/>
</dbReference>
<dbReference type="InterPro" id="IPR011961">
    <property type="entry name" value="RimM"/>
</dbReference>
<dbReference type="InterPro" id="IPR002676">
    <property type="entry name" value="RimM_N"/>
</dbReference>
<dbReference type="InterPro" id="IPR036976">
    <property type="entry name" value="RimM_N_sf"/>
</dbReference>
<dbReference type="InterPro" id="IPR009000">
    <property type="entry name" value="Transl_B-barrel_sf"/>
</dbReference>
<dbReference type="NCBIfam" id="TIGR02273">
    <property type="entry name" value="16S_RimM"/>
    <property type="match status" value="1"/>
</dbReference>
<dbReference type="PANTHER" id="PTHR33692">
    <property type="entry name" value="RIBOSOME MATURATION FACTOR RIMM"/>
    <property type="match status" value="1"/>
</dbReference>
<dbReference type="PANTHER" id="PTHR33692:SF1">
    <property type="entry name" value="RIBOSOME MATURATION FACTOR RIMM"/>
    <property type="match status" value="1"/>
</dbReference>
<dbReference type="Pfam" id="PF24986">
    <property type="entry name" value="PRC_RimM"/>
    <property type="match status" value="1"/>
</dbReference>
<dbReference type="Pfam" id="PF01782">
    <property type="entry name" value="RimM"/>
    <property type="match status" value="1"/>
</dbReference>
<dbReference type="SUPFAM" id="SSF50346">
    <property type="entry name" value="PRC-barrel domain"/>
    <property type="match status" value="1"/>
</dbReference>
<dbReference type="SUPFAM" id="SSF50447">
    <property type="entry name" value="Translation proteins"/>
    <property type="match status" value="1"/>
</dbReference>
<accession>A1V6J3</accession>
<protein>
    <recommendedName>
        <fullName evidence="1">Ribosome maturation factor RimM</fullName>
    </recommendedName>
</protein>